<protein>
    <recommendedName>
        <fullName evidence="1">Small ribosomal subunit protein bS20</fullName>
    </recommendedName>
    <alternativeName>
        <fullName evidence="2">30S ribosomal protein S20</fullName>
    </alternativeName>
</protein>
<evidence type="ECO:0000255" key="1">
    <source>
        <dbReference type="HAMAP-Rule" id="MF_00500"/>
    </source>
</evidence>
<evidence type="ECO:0000305" key="2"/>
<organism>
    <name type="scientific">Clostridium botulinum (strain Alaska E43 / Type E3)</name>
    <dbReference type="NCBI Taxonomy" id="508767"/>
    <lineage>
        <taxon>Bacteria</taxon>
        <taxon>Bacillati</taxon>
        <taxon>Bacillota</taxon>
        <taxon>Clostridia</taxon>
        <taxon>Eubacteriales</taxon>
        <taxon>Clostridiaceae</taxon>
        <taxon>Clostridium</taxon>
    </lineage>
</organism>
<reference key="1">
    <citation type="submission" date="2008-05" db="EMBL/GenBank/DDBJ databases">
        <title>Complete genome sequence of Clostridium botulinum E3 str. Alaska E43.</title>
        <authorList>
            <person name="Brinkac L.M."/>
            <person name="Brown J.L."/>
            <person name="Bruce D."/>
            <person name="Detter C."/>
            <person name="Munk C."/>
            <person name="Smith L.A."/>
            <person name="Smith T.J."/>
            <person name="Sutton G."/>
            <person name="Brettin T.S."/>
        </authorList>
    </citation>
    <scope>NUCLEOTIDE SEQUENCE [LARGE SCALE GENOMIC DNA]</scope>
    <source>
        <strain>Alaska E43 / Type E3</strain>
    </source>
</reference>
<dbReference type="EMBL" id="CP001078">
    <property type="protein sequence ID" value="ACD52873.1"/>
    <property type="molecule type" value="Genomic_DNA"/>
</dbReference>
<dbReference type="RefSeq" id="WP_003372554.1">
    <property type="nucleotide sequence ID" value="NC_010723.1"/>
</dbReference>
<dbReference type="SMR" id="B2V2H7"/>
<dbReference type="KEGG" id="cbt:CLH_0850"/>
<dbReference type="HOGENOM" id="CLU_160655_1_0_9"/>
<dbReference type="GO" id="GO:0005829">
    <property type="term" value="C:cytosol"/>
    <property type="evidence" value="ECO:0007669"/>
    <property type="project" value="TreeGrafter"/>
</dbReference>
<dbReference type="GO" id="GO:0015935">
    <property type="term" value="C:small ribosomal subunit"/>
    <property type="evidence" value="ECO:0007669"/>
    <property type="project" value="TreeGrafter"/>
</dbReference>
<dbReference type="GO" id="GO:0070181">
    <property type="term" value="F:small ribosomal subunit rRNA binding"/>
    <property type="evidence" value="ECO:0007669"/>
    <property type="project" value="TreeGrafter"/>
</dbReference>
<dbReference type="GO" id="GO:0003735">
    <property type="term" value="F:structural constituent of ribosome"/>
    <property type="evidence" value="ECO:0007669"/>
    <property type="project" value="InterPro"/>
</dbReference>
<dbReference type="GO" id="GO:0006412">
    <property type="term" value="P:translation"/>
    <property type="evidence" value="ECO:0007669"/>
    <property type="project" value="UniProtKB-UniRule"/>
</dbReference>
<dbReference type="FunFam" id="1.20.58.110:FF:000001">
    <property type="entry name" value="30S ribosomal protein S20"/>
    <property type="match status" value="1"/>
</dbReference>
<dbReference type="Gene3D" id="1.20.58.110">
    <property type="entry name" value="Ribosomal protein S20"/>
    <property type="match status" value="1"/>
</dbReference>
<dbReference type="HAMAP" id="MF_00500">
    <property type="entry name" value="Ribosomal_bS20"/>
    <property type="match status" value="1"/>
</dbReference>
<dbReference type="InterPro" id="IPR002583">
    <property type="entry name" value="Ribosomal_bS20"/>
</dbReference>
<dbReference type="InterPro" id="IPR036510">
    <property type="entry name" value="Ribosomal_bS20_sf"/>
</dbReference>
<dbReference type="NCBIfam" id="TIGR00029">
    <property type="entry name" value="S20"/>
    <property type="match status" value="1"/>
</dbReference>
<dbReference type="PANTHER" id="PTHR33398">
    <property type="entry name" value="30S RIBOSOMAL PROTEIN S20"/>
    <property type="match status" value="1"/>
</dbReference>
<dbReference type="PANTHER" id="PTHR33398:SF1">
    <property type="entry name" value="SMALL RIBOSOMAL SUBUNIT PROTEIN BS20C"/>
    <property type="match status" value="1"/>
</dbReference>
<dbReference type="Pfam" id="PF01649">
    <property type="entry name" value="Ribosomal_S20p"/>
    <property type="match status" value="1"/>
</dbReference>
<dbReference type="SUPFAM" id="SSF46992">
    <property type="entry name" value="Ribosomal protein S20"/>
    <property type="match status" value="1"/>
</dbReference>
<comment type="function">
    <text evidence="1">Binds directly to 16S ribosomal RNA.</text>
</comment>
<comment type="similarity">
    <text evidence="1">Belongs to the bacterial ribosomal protein bS20 family.</text>
</comment>
<sequence>MANIKSAKKRIKVTETKTLNNRMVKSALKTVIKKFEAAVAGNNVEEAKTAFVAVTKSLDVAASKGVVHKNMAARKKSRLAAKLNAMA</sequence>
<keyword id="KW-0687">Ribonucleoprotein</keyword>
<keyword id="KW-0689">Ribosomal protein</keyword>
<keyword id="KW-0694">RNA-binding</keyword>
<keyword id="KW-0699">rRNA-binding</keyword>
<gene>
    <name evidence="1" type="primary">rpsT</name>
    <name type="ordered locus">CLH_0850</name>
</gene>
<proteinExistence type="inferred from homology"/>
<name>RS20_CLOBA</name>
<accession>B2V2H7</accession>
<feature type="chain" id="PRO_1000126422" description="Small ribosomal subunit protein bS20">
    <location>
        <begin position="1"/>
        <end position="87"/>
    </location>
</feature>